<dbReference type="EMBL" id="AE008917">
    <property type="protein sequence ID" value="AAL51955.1"/>
    <property type="molecule type" value="Genomic_DNA"/>
</dbReference>
<dbReference type="PIR" id="AH3348">
    <property type="entry name" value="AH3348"/>
</dbReference>
<dbReference type="RefSeq" id="WP_002964345.1">
    <property type="nucleotide sequence ID" value="NZ_GG703780.1"/>
</dbReference>
<dbReference type="SMR" id="P66570"/>
<dbReference type="GeneID" id="93016456"/>
<dbReference type="KEGG" id="bme:BMEI0774"/>
<dbReference type="KEGG" id="bmel:DK63_648"/>
<dbReference type="PATRIC" id="fig|224914.52.peg.679"/>
<dbReference type="eggNOG" id="COG0098">
    <property type="taxonomic scope" value="Bacteria"/>
</dbReference>
<dbReference type="PhylomeDB" id="P66570"/>
<dbReference type="Proteomes" id="UP000000419">
    <property type="component" value="Chromosome I"/>
</dbReference>
<dbReference type="GO" id="GO:0015935">
    <property type="term" value="C:small ribosomal subunit"/>
    <property type="evidence" value="ECO:0007669"/>
    <property type="project" value="InterPro"/>
</dbReference>
<dbReference type="GO" id="GO:0019843">
    <property type="term" value="F:rRNA binding"/>
    <property type="evidence" value="ECO:0007669"/>
    <property type="project" value="UniProtKB-UniRule"/>
</dbReference>
<dbReference type="GO" id="GO:0003735">
    <property type="term" value="F:structural constituent of ribosome"/>
    <property type="evidence" value="ECO:0007669"/>
    <property type="project" value="InterPro"/>
</dbReference>
<dbReference type="GO" id="GO:0006412">
    <property type="term" value="P:translation"/>
    <property type="evidence" value="ECO:0007669"/>
    <property type="project" value="UniProtKB-UniRule"/>
</dbReference>
<dbReference type="FunFam" id="3.30.160.20:FF:000001">
    <property type="entry name" value="30S ribosomal protein S5"/>
    <property type="match status" value="1"/>
</dbReference>
<dbReference type="FunFam" id="3.30.230.10:FF:000002">
    <property type="entry name" value="30S ribosomal protein S5"/>
    <property type="match status" value="1"/>
</dbReference>
<dbReference type="Gene3D" id="3.30.160.20">
    <property type="match status" value="1"/>
</dbReference>
<dbReference type="Gene3D" id="3.30.230.10">
    <property type="match status" value="1"/>
</dbReference>
<dbReference type="HAMAP" id="MF_01307_B">
    <property type="entry name" value="Ribosomal_uS5_B"/>
    <property type="match status" value="1"/>
</dbReference>
<dbReference type="InterPro" id="IPR020568">
    <property type="entry name" value="Ribosomal_Su5_D2-typ_SF"/>
</dbReference>
<dbReference type="InterPro" id="IPR000851">
    <property type="entry name" value="Ribosomal_uS5"/>
</dbReference>
<dbReference type="InterPro" id="IPR005712">
    <property type="entry name" value="Ribosomal_uS5_bac-type"/>
</dbReference>
<dbReference type="InterPro" id="IPR005324">
    <property type="entry name" value="Ribosomal_uS5_C"/>
</dbReference>
<dbReference type="InterPro" id="IPR013810">
    <property type="entry name" value="Ribosomal_uS5_N"/>
</dbReference>
<dbReference type="InterPro" id="IPR018192">
    <property type="entry name" value="Ribosomal_uS5_N_CS"/>
</dbReference>
<dbReference type="InterPro" id="IPR014721">
    <property type="entry name" value="Ribsml_uS5_D2-typ_fold_subgr"/>
</dbReference>
<dbReference type="NCBIfam" id="TIGR01021">
    <property type="entry name" value="rpsE_bact"/>
    <property type="match status" value="1"/>
</dbReference>
<dbReference type="PANTHER" id="PTHR48277">
    <property type="entry name" value="MITOCHONDRIAL RIBOSOMAL PROTEIN S5"/>
    <property type="match status" value="1"/>
</dbReference>
<dbReference type="PANTHER" id="PTHR48277:SF1">
    <property type="entry name" value="MITOCHONDRIAL RIBOSOMAL PROTEIN S5"/>
    <property type="match status" value="1"/>
</dbReference>
<dbReference type="Pfam" id="PF00333">
    <property type="entry name" value="Ribosomal_S5"/>
    <property type="match status" value="1"/>
</dbReference>
<dbReference type="Pfam" id="PF03719">
    <property type="entry name" value="Ribosomal_S5_C"/>
    <property type="match status" value="1"/>
</dbReference>
<dbReference type="SUPFAM" id="SSF54768">
    <property type="entry name" value="dsRNA-binding domain-like"/>
    <property type="match status" value="1"/>
</dbReference>
<dbReference type="SUPFAM" id="SSF54211">
    <property type="entry name" value="Ribosomal protein S5 domain 2-like"/>
    <property type="match status" value="1"/>
</dbReference>
<dbReference type="PROSITE" id="PS00585">
    <property type="entry name" value="RIBOSOMAL_S5"/>
    <property type="match status" value="1"/>
</dbReference>
<dbReference type="PROSITE" id="PS50881">
    <property type="entry name" value="S5_DSRBD"/>
    <property type="match status" value="1"/>
</dbReference>
<keyword id="KW-0687">Ribonucleoprotein</keyword>
<keyword id="KW-0689">Ribosomal protein</keyword>
<keyword id="KW-0694">RNA-binding</keyword>
<keyword id="KW-0699">rRNA-binding</keyword>
<reference key="1">
    <citation type="journal article" date="2002" name="Proc. Natl. Acad. Sci. U.S.A.">
        <title>The genome sequence of the facultative intracellular pathogen Brucella melitensis.</title>
        <authorList>
            <person name="DelVecchio V.G."/>
            <person name="Kapatral V."/>
            <person name="Redkar R.J."/>
            <person name="Patra G."/>
            <person name="Mujer C."/>
            <person name="Los T."/>
            <person name="Ivanova N."/>
            <person name="Anderson I."/>
            <person name="Bhattacharyya A."/>
            <person name="Lykidis A."/>
            <person name="Reznik G."/>
            <person name="Jablonski L."/>
            <person name="Larsen N."/>
            <person name="D'Souza M."/>
            <person name="Bernal A."/>
            <person name="Mazur M."/>
            <person name="Goltsman E."/>
            <person name="Selkov E."/>
            <person name="Elzer P.H."/>
            <person name="Hagius S."/>
            <person name="O'Callaghan D."/>
            <person name="Letesson J.-J."/>
            <person name="Haselkorn R."/>
            <person name="Kyrpides N.C."/>
            <person name="Overbeek R."/>
        </authorList>
    </citation>
    <scope>NUCLEOTIDE SEQUENCE [LARGE SCALE GENOMIC DNA]</scope>
    <source>
        <strain>ATCC 23456 / CCUG 17765 / NCTC 10094 / 16M</strain>
    </source>
</reference>
<accession>P66570</accession>
<accession>Q8YHM3</accession>
<protein>
    <recommendedName>
        <fullName evidence="1">Small ribosomal subunit protein uS5</fullName>
    </recommendedName>
    <alternativeName>
        <fullName evidence="2">30S ribosomal protein S5</fullName>
    </alternativeName>
</protein>
<sequence length="186" mass="20464">MAQRERNREERGREERDSEFVDKLVHINRVAKVVKGGRRFGFAALVVVGDQKGRVGFGHGKAREVPEAIRKATEAAKRDMIFVPLRSGRTLHHDVEGRHGAGKVLLRAAPAGKGIIAGGPMRAVFETLGVQDVVAKSLGSSNPYNMVRATFDALKHQMHPKDIAAQRGIKYSTLQARRHDVVGSEE</sequence>
<comment type="function">
    <text evidence="1">With S4 and S12 plays an important role in translational accuracy.</text>
</comment>
<comment type="function">
    <text evidence="1">Located at the back of the 30S subunit body where it stabilizes the conformation of the head with respect to the body.</text>
</comment>
<comment type="subunit">
    <text evidence="1">Part of the 30S ribosomal subunit. Contacts proteins S4 and S8.</text>
</comment>
<comment type="domain">
    <text>The N-terminal domain interacts with the head of the 30S subunit; the C-terminal domain interacts with the body and contacts protein S4. The interaction surface between S4 and S5 is involved in control of translational fidelity.</text>
</comment>
<comment type="similarity">
    <text evidence="1">Belongs to the universal ribosomal protein uS5 family.</text>
</comment>
<gene>
    <name evidence="1" type="primary">rpsE</name>
    <name type="ordered locus">BMEI0774</name>
</gene>
<evidence type="ECO:0000255" key="1">
    <source>
        <dbReference type="HAMAP-Rule" id="MF_01307"/>
    </source>
</evidence>
<evidence type="ECO:0000305" key="2"/>
<proteinExistence type="inferred from homology"/>
<organism>
    <name type="scientific">Brucella melitensis biotype 1 (strain ATCC 23456 / CCUG 17765 / NCTC 10094 / 16M)</name>
    <dbReference type="NCBI Taxonomy" id="224914"/>
    <lineage>
        <taxon>Bacteria</taxon>
        <taxon>Pseudomonadati</taxon>
        <taxon>Pseudomonadota</taxon>
        <taxon>Alphaproteobacteria</taxon>
        <taxon>Hyphomicrobiales</taxon>
        <taxon>Brucellaceae</taxon>
        <taxon>Brucella/Ochrobactrum group</taxon>
        <taxon>Brucella</taxon>
    </lineage>
</organism>
<name>RS5_BRUME</name>
<feature type="chain" id="PRO_0000131483" description="Small ribosomal subunit protein uS5">
    <location>
        <begin position="1"/>
        <end position="186"/>
    </location>
</feature>
<feature type="domain" description="S5 DRBM" evidence="1">
    <location>
        <begin position="20"/>
        <end position="83"/>
    </location>
</feature>